<feature type="chain" id="PRO_0000180498" description="DNA primase">
    <location>
        <begin position="1"/>
        <end position="576"/>
    </location>
</feature>
<feature type="domain" description="Toprim" evidence="1">
    <location>
        <begin position="251"/>
        <end position="333"/>
    </location>
</feature>
<feature type="zinc finger region" description="CHC2-type" evidence="1">
    <location>
        <begin position="40"/>
        <end position="64"/>
    </location>
</feature>
<feature type="binding site" evidence="1">
    <location>
        <position position="257"/>
    </location>
    <ligand>
        <name>Mg(2+)</name>
        <dbReference type="ChEBI" id="CHEBI:18420"/>
        <label>1</label>
        <note>catalytic</note>
    </ligand>
</feature>
<feature type="binding site" evidence="1">
    <location>
        <position position="301"/>
    </location>
    <ligand>
        <name>Mg(2+)</name>
        <dbReference type="ChEBI" id="CHEBI:18420"/>
        <label>1</label>
        <note>catalytic</note>
    </ligand>
</feature>
<feature type="binding site" evidence="1">
    <location>
        <position position="301"/>
    </location>
    <ligand>
        <name>Mg(2+)</name>
        <dbReference type="ChEBI" id="CHEBI:18420"/>
        <label>2</label>
    </ligand>
</feature>
<feature type="binding site" evidence="1">
    <location>
        <position position="303"/>
    </location>
    <ligand>
        <name>Mg(2+)</name>
        <dbReference type="ChEBI" id="CHEBI:18420"/>
        <label>2</label>
    </ligand>
</feature>
<proteinExistence type="inferred from homology"/>
<dbReference type="EC" id="2.7.7.101" evidence="1"/>
<dbReference type="EMBL" id="U63641">
    <property type="protein sequence ID" value="AAB09542.1"/>
    <property type="molecule type" value="Genomic_DNA"/>
</dbReference>
<dbReference type="SMR" id="P71481"/>
<dbReference type="STRING" id="91892.BIZ52_11270"/>
<dbReference type="eggNOG" id="COG0358">
    <property type="taxonomic scope" value="Bacteria"/>
</dbReference>
<dbReference type="GO" id="GO:0005737">
    <property type="term" value="C:cytoplasm"/>
    <property type="evidence" value="ECO:0007669"/>
    <property type="project" value="TreeGrafter"/>
</dbReference>
<dbReference type="GO" id="GO:0000428">
    <property type="term" value="C:DNA-directed RNA polymerase complex"/>
    <property type="evidence" value="ECO:0007669"/>
    <property type="project" value="UniProtKB-KW"/>
</dbReference>
<dbReference type="GO" id="GO:1990077">
    <property type="term" value="C:primosome complex"/>
    <property type="evidence" value="ECO:0007669"/>
    <property type="project" value="UniProtKB-KW"/>
</dbReference>
<dbReference type="GO" id="GO:0003677">
    <property type="term" value="F:DNA binding"/>
    <property type="evidence" value="ECO:0007669"/>
    <property type="project" value="UniProtKB-KW"/>
</dbReference>
<dbReference type="GO" id="GO:0003899">
    <property type="term" value="F:DNA-directed RNA polymerase activity"/>
    <property type="evidence" value="ECO:0007669"/>
    <property type="project" value="InterPro"/>
</dbReference>
<dbReference type="GO" id="GO:0008270">
    <property type="term" value="F:zinc ion binding"/>
    <property type="evidence" value="ECO:0007669"/>
    <property type="project" value="UniProtKB-UniRule"/>
</dbReference>
<dbReference type="GO" id="GO:0006269">
    <property type="term" value="P:DNA replication, synthesis of primer"/>
    <property type="evidence" value="ECO:0007669"/>
    <property type="project" value="UniProtKB-UniRule"/>
</dbReference>
<dbReference type="CDD" id="cd03364">
    <property type="entry name" value="TOPRIM_DnaG_primases"/>
    <property type="match status" value="1"/>
</dbReference>
<dbReference type="FunFam" id="3.40.1360.10:FF:000002">
    <property type="entry name" value="DNA primase"/>
    <property type="match status" value="1"/>
</dbReference>
<dbReference type="FunFam" id="3.90.580.10:FF:000001">
    <property type="entry name" value="DNA primase"/>
    <property type="match status" value="1"/>
</dbReference>
<dbReference type="FunFam" id="3.90.980.10:FF:000001">
    <property type="entry name" value="DNA primase"/>
    <property type="match status" value="1"/>
</dbReference>
<dbReference type="Gene3D" id="3.40.1360.10">
    <property type="match status" value="1"/>
</dbReference>
<dbReference type="Gene3D" id="3.90.980.10">
    <property type="entry name" value="DNA primase, catalytic core, N-terminal domain"/>
    <property type="match status" value="1"/>
</dbReference>
<dbReference type="Gene3D" id="1.10.860.10">
    <property type="entry name" value="DNAb Helicase, Chain A"/>
    <property type="match status" value="1"/>
</dbReference>
<dbReference type="Gene3D" id="1.20.50.20">
    <property type="entry name" value="DnaG, RNA polymerase domain, helical bundle"/>
    <property type="match status" value="1"/>
</dbReference>
<dbReference type="Gene3D" id="3.90.580.10">
    <property type="entry name" value="Zinc finger, CHC2-type domain"/>
    <property type="match status" value="1"/>
</dbReference>
<dbReference type="HAMAP" id="MF_00974">
    <property type="entry name" value="DNA_primase_DnaG"/>
    <property type="match status" value="1"/>
</dbReference>
<dbReference type="InterPro" id="IPR016136">
    <property type="entry name" value="DNA_helicase_N/primase_C"/>
</dbReference>
<dbReference type="InterPro" id="IPR037068">
    <property type="entry name" value="DNA_primase_core_N_sf"/>
</dbReference>
<dbReference type="InterPro" id="IPR019475">
    <property type="entry name" value="DNA_primase_DnaB-bd"/>
</dbReference>
<dbReference type="InterPro" id="IPR006295">
    <property type="entry name" value="DNA_primase_DnaG"/>
</dbReference>
<dbReference type="InterPro" id="IPR013173">
    <property type="entry name" value="DNA_primase_DnaG_DnaB-bd_dom"/>
</dbReference>
<dbReference type="InterPro" id="IPR036977">
    <property type="entry name" value="DNA_primase_Znf_CHC2"/>
</dbReference>
<dbReference type="InterPro" id="IPR030846">
    <property type="entry name" value="DnaG_bac"/>
</dbReference>
<dbReference type="InterPro" id="IPR013264">
    <property type="entry name" value="DNAG_N"/>
</dbReference>
<dbReference type="InterPro" id="IPR050219">
    <property type="entry name" value="DnaG_primase"/>
</dbReference>
<dbReference type="InterPro" id="IPR034151">
    <property type="entry name" value="TOPRIM_DnaG_bac"/>
</dbReference>
<dbReference type="InterPro" id="IPR006171">
    <property type="entry name" value="TOPRIM_dom"/>
</dbReference>
<dbReference type="InterPro" id="IPR002694">
    <property type="entry name" value="Znf_CHC2"/>
</dbReference>
<dbReference type="NCBIfam" id="TIGR01391">
    <property type="entry name" value="dnaG"/>
    <property type="match status" value="1"/>
</dbReference>
<dbReference type="PANTHER" id="PTHR30313">
    <property type="entry name" value="DNA PRIMASE"/>
    <property type="match status" value="1"/>
</dbReference>
<dbReference type="PANTHER" id="PTHR30313:SF2">
    <property type="entry name" value="DNA PRIMASE"/>
    <property type="match status" value="1"/>
</dbReference>
<dbReference type="Pfam" id="PF10410">
    <property type="entry name" value="DnaB_bind"/>
    <property type="match status" value="1"/>
</dbReference>
<dbReference type="Pfam" id="PF08278">
    <property type="entry name" value="DnaG_DnaB_bind"/>
    <property type="match status" value="1"/>
</dbReference>
<dbReference type="Pfam" id="PF08275">
    <property type="entry name" value="DNAG_N"/>
    <property type="match status" value="1"/>
</dbReference>
<dbReference type="Pfam" id="PF13155">
    <property type="entry name" value="Toprim_2"/>
    <property type="match status" value="1"/>
</dbReference>
<dbReference type="Pfam" id="PF01807">
    <property type="entry name" value="Zn_ribbon_DnaG"/>
    <property type="match status" value="1"/>
</dbReference>
<dbReference type="PIRSF" id="PIRSF002811">
    <property type="entry name" value="DnaG"/>
    <property type="match status" value="1"/>
</dbReference>
<dbReference type="SMART" id="SM00766">
    <property type="entry name" value="DnaG_DnaB_bind"/>
    <property type="match status" value="1"/>
</dbReference>
<dbReference type="SMART" id="SM00493">
    <property type="entry name" value="TOPRIM"/>
    <property type="match status" value="1"/>
</dbReference>
<dbReference type="SMART" id="SM00400">
    <property type="entry name" value="ZnF_CHCC"/>
    <property type="match status" value="1"/>
</dbReference>
<dbReference type="SUPFAM" id="SSF56731">
    <property type="entry name" value="DNA primase core"/>
    <property type="match status" value="1"/>
</dbReference>
<dbReference type="SUPFAM" id="SSF117023">
    <property type="entry name" value="DNA primase DnaG, C-terminal domain"/>
    <property type="match status" value="1"/>
</dbReference>
<dbReference type="SUPFAM" id="SSF57783">
    <property type="entry name" value="Zinc beta-ribbon"/>
    <property type="match status" value="1"/>
</dbReference>
<dbReference type="PROSITE" id="PS50880">
    <property type="entry name" value="TOPRIM"/>
    <property type="match status" value="1"/>
</dbReference>
<sequence>MSGLIPQPFIDDLLNRTDLVELIDGYVPLKKRGNSHIACCPFHNEKTPSFNVVAKKQFYHCFGCGASGNAISFVMNYLNQGFTDAVETLRRAWVKCPRDGTGEKHKSSLNLYNLMSEVSQYYQKKLKYNGQVAIDYLRNRGLSGEIAKRYHLGYAPEGWHNLEKAFPNNQRELLSTGMLIKSDEGKIYDRYRNRIMFPIHDRNGRVIGFGGRVLDKDQKPKYLNSPETVLFQKSRELYGLHQVLSQQKNPDSIIVVEGYMDVIALAQHGIFNVVATLGTATSTFHIQLLAKHTKHLIFCFDGDAAGKQAAWRALESSLPHLNAGLDAGFIFLPNEHDPDSLVRNEGKNGFLELLQQATPLHRFFFDTLSKDINLSNPAGKTQLINAVKPYLQKMVEGSYKQLLIDDLSRLTHIESHRLTNLITDKSESKPEVQAAISRSPLRIAIALLLQNPEIYSIAIQQINPALLHEQEHHILLKLLQQLKDKPNANTATLIEFWRNSSYFELIVKLAAWDHQVPEQELTKEFIDVLLFLQKQNREILIRQYIEKSRKTGLTEAERLSLQNLLKERHGQAEIEK</sequence>
<keyword id="KW-0235">DNA replication</keyword>
<keyword id="KW-0238">DNA-binding</keyword>
<keyword id="KW-0240">DNA-directed RNA polymerase</keyword>
<keyword id="KW-0460">Magnesium</keyword>
<keyword id="KW-0479">Metal-binding</keyword>
<keyword id="KW-0548">Nucleotidyltransferase</keyword>
<keyword id="KW-0639">Primosome</keyword>
<keyword id="KW-0804">Transcription</keyword>
<keyword id="KW-0808">Transferase</keyword>
<keyword id="KW-0862">Zinc</keyword>
<keyword id="KW-0863">Zinc-finger</keyword>
<protein>
    <recommendedName>
        <fullName evidence="1">DNA primase</fullName>
        <ecNumber evidence="1">2.7.7.101</ecNumber>
    </recommendedName>
</protein>
<evidence type="ECO:0000255" key="1">
    <source>
        <dbReference type="HAMAP-Rule" id="MF_00974"/>
    </source>
</evidence>
<reference key="1">
    <citation type="submission" date="1996-07" db="EMBL/GenBank/DDBJ databases">
        <authorList>
            <person name="Hoffman P.S."/>
            <person name="Cheng H."/>
        </authorList>
    </citation>
    <scope>NUCLEOTIDE SEQUENCE [GENOMIC DNA]</scope>
    <source>
        <strain>SVir</strain>
    </source>
</reference>
<name>DNAG_LEGPN</name>
<organism>
    <name type="scientific">Legionella pneumophila</name>
    <dbReference type="NCBI Taxonomy" id="446"/>
    <lineage>
        <taxon>Bacteria</taxon>
        <taxon>Pseudomonadati</taxon>
        <taxon>Pseudomonadota</taxon>
        <taxon>Gammaproteobacteria</taxon>
        <taxon>Legionellales</taxon>
        <taxon>Legionellaceae</taxon>
        <taxon>Legionella</taxon>
    </lineage>
</organism>
<comment type="function">
    <text evidence="1">RNA polymerase that catalyzes the synthesis of short RNA molecules used as primers for DNA polymerase during DNA replication.</text>
</comment>
<comment type="catalytic activity">
    <reaction evidence="1">
        <text>ssDNA + n NTP = ssDNA/pppN(pN)n-1 hybrid + (n-1) diphosphate.</text>
        <dbReference type="EC" id="2.7.7.101"/>
    </reaction>
</comment>
<comment type="cofactor">
    <cofactor evidence="1">
        <name>Zn(2+)</name>
        <dbReference type="ChEBI" id="CHEBI:29105"/>
    </cofactor>
    <text evidence="1">Binds 1 zinc ion per monomer.</text>
</comment>
<comment type="cofactor">
    <cofactor evidence="1">
        <name>Mg(2+)</name>
        <dbReference type="ChEBI" id="CHEBI:18420"/>
    </cofactor>
    <text evidence="1">Binds two Mg(2+) per subunit.</text>
</comment>
<comment type="subunit">
    <text evidence="1">Monomer. Interacts with DnaB.</text>
</comment>
<comment type="domain">
    <text evidence="1">Contains an N-terminal zinc-binding domain, a central core domain that contains the primase activity, and a C-terminal DnaB-binding domain.</text>
</comment>
<comment type="similarity">
    <text evidence="1">Belongs to the DnaG primase family.</text>
</comment>
<accession>P71481</accession>
<gene>
    <name evidence="1" type="primary">dnaG</name>
</gene>